<name>CAPSD_FPV</name>
<feature type="chain" id="PRO_0000039439" description="Capsid protein VP1">
    <location>
        <begin position="1"/>
        <end position="727"/>
    </location>
</feature>
<feature type="region of interest" description="Disordered" evidence="3">
    <location>
        <begin position="1"/>
        <end position="38"/>
    </location>
</feature>
<feature type="region of interest" description="Phospholipase A2-like" evidence="1">
    <location>
        <begin position="19"/>
        <end position="64"/>
    </location>
</feature>
<feature type="region of interest" description="Disordered" evidence="3">
    <location>
        <begin position="95"/>
        <end position="184"/>
    </location>
</feature>
<feature type="region of interest" description="Disordered" evidence="3">
    <location>
        <begin position="507"/>
        <end position="536"/>
    </location>
</feature>
<feature type="short sequence motif" description="Nuclear localization signal" evidence="2">
    <location>
        <begin position="4"/>
        <end position="13"/>
    </location>
</feature>
<feature type="compositionally biased region" description="Basic residues" evidence="3">
    <location>
        <begin position="1"/>
        <end position="10"/>
    </location>
</feature>
<feature type="compositionally biased region" description="Polar residues" evidence="3">
    <location>
        <begin position="25"/>
        <end position="35"/>
    </location>
</feature>
<feature type="compositionally biased region" description="Gly residues" evidence="3">
    <location>
        <begin position="166"/>
        <end position="183"/>
    </location>
</feature>
<feature type="binding site" evidence="1">
    <location>
        <position position="323"/>
    </location>
    <ligand>
        <name>Mg(2+)</name>
        <dbReference type="ChEBI" id="CHEBI:18420"/>
        <label>1</label>
    </ligand>
</feature>
<feature type="disulfide bond" evidence="1">
    <location>
        <begin position="633"/>
        <end position="637"/>
    </location>
</feature>
<feature type="splice variant" id="VSP_041145" description="In isoform VP2." evidence="5">
    <location>
        <begin position="1"/>
        <end position="143"/>
    </location>
</feature>
<proteinExistence type="evidence at protein level"/>
<accession>P04864</accession>
<accession>Q65112</accession>
<organism>
    <name type="scientific">Feline panleukopenia virus</name>
    <name type="common">FPV</name>
    <dbReference type="NCBI Taxonomy" id="10786"/>
    <lineage>
        <taxon>Viruses</taxon>
        <taxon>Monodnaviria</taxon>
        <taxon>Shotokuvirae</taxon>
        <taxon>Cossaviricota</taxon>
        <taxon>Quintoviricetes</taxon>
        <taxon>Piccovirales</taxon>
        <taxon>Parvoviridae</taxon>
        <taxon>Parvovirinae</taxon>
        <taxon>Protoparvovirus</taxon>
        <taxon>Protoparvovirus carnivoran1</taxon>
    </lineage>
</organism>
<sequence>MAPPAKRARRGLVPPGYKYLGPGNSLDQGEPTNPSDAAAKEHDEAYAAYLRSGKNPYLYFSPADQRFIDQTKDATDWGGKIGHYFFRAKKAIAPVLTDTPDHPSTSRPTKPTKRSKPPPHIFINLAKKKKAGAGQVKRDNQAPMSDGAVQPDGGQPAVRNERATGSGNGSGGGGGGGSGGVGISTGTFNNQTEFKFLENGWVEITANSSRLVHLNMPESENYKRVVVNNMDKTAVKGNMALDDTHVQIVTPWSLVDANAWGVWFNPGDWQLIVNTMSELHLVSFEQEIFNVVLKTVSESATQPPTKVYNNDLTASLMVALDSNNTMPFTPAAMRSETLGFYPWKPTIPTPWRYYFQWDRTLIPSHTGTSGTPTNIYHGTDPDDVQFYTIENSVPVHLLRTGDEFATGTFFFDCKPCRLTHTWQTNRALGLPPFLNSLPQSEGATNFGDIGVQQDKRRGVTQMGNTDYITEATIMRPAEVGYSAPYYSFEASTQGPFKIPIAAGRGGAQTDENQAADGDPRYAFGRQHGQKTTTTGETPERFTYIAHQDTGRYPAGDWIQNINFNLPVTNDNVLLPTDPIGGKTGINYTNIFNTYGPLTALNNVPPVYPNGQIWDKEFDTDLKPRLHVNAPFVCQNNCPGQLFVKVAPNLTNEYDPDASANMSRIVTYSDFWWKGKLVFKAKLRASHTWNPIQQMSINVDNQFNYLPNNIGAMKIVYEKSQLAPRKLY</sequence>
<evidence type="ECO:0000250" key="1"/>
<evidence type="ECO:0000255" key="2"/>
<evidence type="ECO:0000256" key="3">
    <source>
        <dbReference type="SAM" id="MobiDB-lite"/>
    </source>
</evidence>
<evidence type="ECO:0000269" key="4">
    <source>
    </source>
</evidence>
<evidence type="ECO:0000305" key="5"/>
<dbReference type="EMBL" id="M10824">
    <property type="protein sequence ID" value="AAA47161.1"/>
    <property type="molecule type" value="Genomic_DNA"/>
</dbReference>
<dbReference type="EMBL" id="M10824">
    <property type="protein sequence ID" value="AAA47162.1"/>
    <property type="molecule type" value="Genomic_DNA"/>
</dbReference>
<dbReference type="PIR" id="A03701">
    <property type="entry name" value="VCPV1F"/>
</dbReference>
<dbReference type="SMR" id="P04864"/>
<dbReference type="ABCD" id="P04864">
    <property type="antibodies" value="7 sequenced antibodies"/>
</dbReference>
<dbReference type="GO" id="GO:0043657">
    <property type="term" value="C:host cell"/>
    <property type="evidence" value="ECO:0007669"/>
    <property type="project" value="GOC"/>
</dbReference>
<dbReference type="GO" id="GO:0042025">
    <property type="term" value="C:host cell nucleus"/>
    <property type="evidence" value="ECO:0007669"/>
    <property type="project" value="UniProtKB-SubCell"/>
</dbReference>
<dbReference type="GO" id="GO:0039615">
    <property type="term" value="C:T=1 icosahedral viral capsid"/>
    <property type="evidence" value="ECO:0007669"/>
    <property type="project" value="UniProtKB-KW"/>
</dbReference>
<dbReference type="GO" id="GO:0046872">
    <property type="term" value="F:metal ion binding"/>
    <property type="evidence" value="ECO:0007669"/>
    <property type="project" value="UniProtKB-KW"/>
</dbReference>
<dbReference type="GO" id="GO:0005198">
    <property type="term" value="F:structural molecule activity"/>
    <property type="evidence" value="ECO:0007669"/>
    <property type="project" value="InterPro"/>
</dbReference>
<dbReference type="GO" id="GO:0075512">
    <property type="term" value="P:clathrin-dependent endocytosis of virus by host cell"/>
    <property type="evidence" value="ECO:0007669"/>
    <property type="project" value="UniProtKB-KW"/>
</dbReference>
<dbReference type="GO" id="GO:0075521">
    <property type="term" value="P:microtubule-dependent intracellular transport of viral material towards nucleus"/>
    <property type="evidence" value="ECO:0007669"/>
    <property type="project" value="UniProtKB-KW"/>
</dbReference>
<dbReference type="GO" id="GO:0140267">
    <property type="term" value="P:symbiont entry into host cell via permeabilization of host membrane"/>
    <property type="evidence" value="ECO:0007669"/>
    <property type="project" value="UniProtKB-KW"/>
</dbReference>
<dbReference type="GO" id="GO:0075732">
    <property type="term" value="P:viral penetration into host nucleus"/>
    <property type="evidence" value="ECO:0007669"/>
    <property type="project" value="UniProtKB-KW"/>
</dbReference>
<dbReference type="GO" id="GO:0019062">
    <property type="term" value="P:virion attachment to host cell"/>
    <property type="evidence" value="ECO:0007669"/>
    <property type="project" value="UniProtKB-KW"/>
</dbReference>
<dbReference type="Gene3D" id="2.170.30.10">
    <property type="entry name" value="Parvovirus coat protein VP1/VP2"/>
    <property type="match status" value="1"/>
</dbReference>
<dbReference type="InterPro" id="IPR016184">
    <property type="entry name" value="Capsid/spike_ssDNA_virus"/>
</dbReference>
<dbReference type="InterPro" id="IPR001403">
    <property type="entry name" value="Parvovirus_coat"/>
</dbReference>
<dbReference type="InterPro" id="IPR013607">
    <property type="entry name" value="Phospholipase_A2-like"/>
</dbReference>
<dbReference type="InterPro" id="IPR036952">
    <property type="entry name" value="VP1/VP2"/>
</dbReference>
<dbReference type="Pfam" id="PF00740">
    <property type="entry name" value="Parvo_coat"/>
    <property type="match status" value="1"/>
</dbReference>
<dbReference type="Pfam" id="PF08398">
    <property type="entry name" value="Phospholip_A2_4"/>
    <property type="match status" value="1"/>
</dbReference>
<dbReference type="SUPFAM" id="SSF88645">
    <property type="entry name" value="ssDNA viruses"/>
    <property type="match status" value="1"/>
</dbReference>
<keyword id="KW-0025">Alternative splicing</keyword>
<keyword id="KW-0167">Capsid protein</keyword>
<keyword id="KW-1165">Clathrin-mediated endocytosis of virus by host</keyword>
<keyword id="KW-1176">Cytoplasmic inwards viral transport</keyword>
<keyword id="KW-1015">Disulfide bond</keyword>
<keyword id="KW-1048">Host nucleus</keyword>
<keyword id="KW-0945">Host-virus interaction</keyword>
<keyword id="KW-0460">Magnesium</keyword>
<keyword id="KW-0479">Metal-binding</keyword>
<keyword id="KW-1177">Microtubular inwards viral transport</keyword>
<keyword id="KW-1140">T=1 icosahedral capsid protein</keyword>
<keyword id="KW-1161">Viral attachment to host cell</keyword>
<keyword id="KW-1162">Viral penetration into host cytoplasm</keyword>
<keyword id="KW-1163">Viral penetration into host nucleus</keyword>
<keyword id="KW-1173">Viral penetration via permeabilization of host membrane</keyword>
<keyword id="KW-0946">Virion</keyword>
<keyword id="KW-1164">Virus endocytosis by host</keyword>
<keyword id="KW-1160">Virus entry into host cell</keyword>
<comment type="function">
    <text evidence="1 4">Capsid protein self-assembles to form an icosahedral capsid with a T=1 symmetry, about 22 nm in diameter, and consisting of 60 copies of two size variants of the capsid proteins, VP1 and VP2, which differ by the presence of an N-terminal extension in the minor protein VP1. The capsid encapsulates the genomic ssDNA. Capsid proteins are responsible for the attachment to host cell receptor TFRC. This attachment induces virion internalization predominantly through clathrin-dependent endocytosis. Binding to the host receptors also induces capsid rearrangements leading to surface exposure of VP1 N-terminus (By similarity).</text>
</comment>
<comment type="subunit">
    <text evidence="4">Interacts with host TFRC.</text>
</comment>
<comment type="subcellular location">
    <subcellularLocation>
        <location evidence="1">Virion</location>
    </subcellularLocation>
    <subcellularLocation>
        <location evidence="5">Host nucleus</location>
    </subcellularLocation>
</comment>
<comment type="alternative products">
    <event type="alternative splicing"/>
    <isoform>
        <id>P04864-1</id>
        <name>VP1</name>
        <sequence type="displayed"/>
    </isoform>
    <isoform>
        <id>P04864-2</id>
        <name>VP2</name>
        <sequence type="described" ref="VSP_041145"/>
    </isoform>
</comment>
<comment type="domain">
    <text>The N-terminus of VP1 is sequestered within the mature capsid. It contains a phospholipase A2-like region and putative nuclear localization signals.</text>
</comment>
<comment type="miscellaneous">
    <text>The capsids of autonomous parvoviruses expose a proportion of VP2 N-terminus and part of that sequence can be cleaved of to form VP3.</text>
</comment>
<comment type="miscellaneous">
    <molecule>Isoform VP1</molecule>
    <text>Minor splicing isoform.</text>
</comment>
<comment type="miscellaneous">
    <molecule>Isoform VP2</molecule>
    <text evidence="5">Major splicing isoform produced by deletion of the initiating AUG for VP1 and downstream translation of VP2.</text>
</comment>
<comment type="similarity">
    <text evidence="5">Belongs to the parvoviridae capsid protein family.</text>
</comment>
<protein>
    <recommendedName>
        <fullName>Capsid protein VP1</fullName>
    </recommendedName>
    <alternativeName>
        <fullName>Coat protein VP1</fullName>
    </alternativeName>
</protein>
<reference key="1">
    <citation type="journal article" date="1985" name="J. Virol.">
        <title>Cloning and sequence of DNA encoding structural proteins of the autonomous parvovirus feline panleukopenia virus.</title>
        <authorList>
            <person name="Carlson J."/>
            <person name="Rushlow K."/>
            <person name="Maxwell I."/>
            <person name="Maxwell F."/>
            <person name="Winston S."/>
            <person name="Hahn W."/>
        </authorList>
    </citation>
    <scope>NUCLEOTIDE SEQUENCE [GENOMIC DNA]</scope>
</reference>
<reference key="2">
    <citation type="journal article" date="2009" name="J. Virol.">
        <title>Early steps in cell infection by parvoviruses: host-specific differences in cell receptor binding but similar endosomal trafficking.</title>
        <authorList>
            <person name="Harbison C.E."/>
            <person name="Lyi S.M."/>
            <person name="Weichert W.S."/>
            <person name="Parrish C.R."/>
        </authorList>
    </citation>
    <scope>FUNCTION</scope>
    <scope>INTERACTION WITH FELINE TFRC</scope>
</reference>
<organismHost>
    <name type="scientific">Felidae</name>
    <name type="common">cat family</name>
    <dbReference type="NCBI Taxonomy" id="9681"/>
</organismHost>
<organismHost>
    <name type="scientific">Nasua nasua</name>
    <name type="common">Ring-tailed coati</name>
    <dbReference type="NCBI Taxonomy" id="9651"/>
</organismHost>
<organismHost>
    <name type="scientific">Procyon lotor</name>
    <name type="common">Raccoon</name>
    <dbReference type="NCBI Taxonomy" id="9654"/>
</organismHost>